<gene>
    <name evidence="5" type="primary">DIM1A</name>
    <name evidence="9" type="ordered locus">At2g47420</name>
    <name evidence="10" type="ORF">T30B22.28</name>
</gene>
<comment type="function">
    <text evidence="4 7">N6-adenine methyltransferase which modifies the AA dinucleotide at the plant nuclear 18S rRNA nucleotides A1785 and A1786 (PubMed:22829145). Required for generating appropriate patterns of gene expression during root development, including the cell-specific expression of transcriptional regulators involved in root hair and non-hair cells patterning (PubMed:22829145).</text>
</comment>
<comment type="catalytic activity">
    <reaction evidence="4">
        <text>adenosine(1785)/adenosine(1786) in 18S rRNA + 4 S-adenosyl-L-methionine = N(6)-dimethyladenosine(1785)/N(6)-dimethyladenosine(1786) in 18S rRNA + 4 S-adenosyl-L-homocysteine + 4 H(+)</text>
        <dbReference type="Rhea" id="RHEA:47640"/>
        <dbReference type="Rhea" id="RHEA-COMP:11866"/>
        <dbReference type="Rhea" id="RHEA-COMP:11867"/>
        <dbReference type="ChEBI" id="CHEBI:15378"/>
        <dbReference type="ChEBI" id="CHEBI:57856"/>
        <dbReference type="ChEBI" id="CHEBI:59789"/>
        <dbReference type="ChEBI" id="CHEBI:74411"/>
        <dbReference type="ChEBI" id="CHEBI:74493"/>
    </reaction>
</comment>
<comment type="subcellular location">
    <subcellularLocation>
        <location evidence="3 4">Nucleus</location>
    </subcellularLocation>
    <subcellularLocation>
        <location evidence="3 4">Nucleus</location>
        <location evidence="3 4">Nucleolus</location>
    </subcellularLocation>
</comment>
<comment type="tissue specificity">
    <text evidence="4">Expressed in rapidly dividing tissues, including root meristems and lateral root primordia, developing cotyledons and leaves, petals, anther, pollen grains and silique abscission zone.</text>
</comment>
<comment type="miscellaneous">
    <text evidence="8">The inability to isolate a null mutant suggests that DIM1A is essential for viability.</text>
</comment>
<comment type="similarity">
    <text evidence="6">Belongs to the class I-like SAM-binding methyltransferase superfamily. rRNA adenine N(6)-methyltransferase family.</text>
</comment>
<evidence type="ECO:0000255" key="1">
    <source>
        <dbReference type="PROSITE-ProRule" id="PRU01026"/>
    </source>
</evidence>
<evidence type="ECO:0000256" key="2">
    <source>
        <dbReference type="SAM" id="MobiDB-lite"/>
    </source>
</evidence>
<evidence type="ECO:0000269" key="3">
    <source>
    </source>
</evidence>
<evidence type="ECO:0000269" key="4">
    <source>
    </source>
</evidence>
<evidence type="ECO:0000303" key="5">
    <source>
    </source>
</evidence>
<evidence type="ECO:0000305" key="6"/>
<evidence type="ECO:0000305" key="7">
    <source>
    </source>
</evidence>
<evidence type="ECO:0000305" key="8">
    <source>
    </source>
</evidence>
<evidence type="ECO:0000312" key="9">
    <source>
        <dbReference type="Araport" id="AT2G47420"/>
    </source>
</evidence>
<evidence type="ECO:0000312" key="10">
    <source>
        <dbReference type="EMBL" id="AAC62868.1"/>
    </source>
</evidence>
<evidence type="ECO:0000312" key="11">
    <source>
        <dbReference type="Proteomes" id="UP000006548"/>
    </source>
</evidence>
<sequence length="353" mass="39687">MAGGKIRKEKPKASNRAPSNHYQGGISFHKSKGQHILKNPLLVDSIVQKAGIKSTDVILEIGPGTGNLTKKLLEAGKEVIAVELDSRMVLELQRRFQGTPFSNRLKVIQGDVLKTELPRFDICVANIPYQISSPLTFKLLFHPTSFRCAVIMYQREFAMRLVAQPGDNLYCRLSVNTQLYARVSHLLKVGKNNFRPPPKVDSSVVRIEPRRPGPQVNKKEWDGFLRVCFIRKNKTLGSIFKQKSVLSMLEKNFKTLQAVLASLQNNGEPALNTTSMDLGDQSMGMEDDDNEMDDDDMEMDEGEGDGGETSEFKEKVMNVLKEGGFEEKRSSKLSQQEFLYLLSLFNKSGIHFT</sequence>
<reference key="1">
    <citation type="journal article" date="1999" name="Nature">
        <title>Sequence and analysis of chromosome 2 of the plant Arabidopsis thaliana.</title>
        <authorList>
            <person name="Lin X."/>
            <person name="Kaul S."/>
            <person name="Rounsley S.D."/>
            <person name="Shea T.P."/>
            <person name="Benito M.-I."/>
            <person name="Town C.D."/>
            <person name="Fujii C.Y."/>
            <person name="Mason T.M."/>
            <person name="Bowman C.L."/>
            <person name="Barnstead M.E."/>
            <person name="Feldblyum T.V."/>
            <person name="Buell C.R."/>
            <person name="Ketchum K.A."/>
            <person name="Lee J.J."/>
            <person name="Ronning C.M."/>
            <person name="Koo H.L."/>
            <person name="Moffat K.S."/>
            <person name="Cronin L.A."/>
            <person name="Shen M."/>
            <person name="Pai G."/>
            <person name="Van Aken S."/>
            <person name="Umayam L."/>
            <person name="Tallon L.J."/>
            <person name="Gill J.E."/>
            <person name="Adams M.D."/>
            <person name="Carrera A.J."/>
            <person name="Creasy T.H."/>
            <person name="Goodman H.M."/>
            <person name="Somerville C.R."/>
            <person name="Copenhaver G.P."/>
            <person name="Preuss D."/>
            <person name="Nierman W.C."/>
            <person name="White O."/>
            <person name="Eisen J.A."/>
            <person name="Salzberg S.L."/>
            <person name="Fraser C.M."/>
            <person name="Venter J.C."/>
        </authorList>
    </citation>
    <scope>NUCLEOTIDE SEQUENCE [LARGE SCALE GENOMIC DNA]</scope>
    <source>
        <strain>cv. Columbia</strain>
    </source>
</reference>
<reference key="2">
    <citation type="journal article" date="2017" name="Plant J.">
        <title>Araport11: a complete reannotation of the Arabidopsis thaliana reference genome.</title>
        <authorList>
            <person name="Cheng C.Y."/>
            <person name="Krishnakumar V."/>
            <person name="Chan A.P."/>
            <person name="Thibaud-Nissen F."/>
            <person name="Schobel S."/>
            <person name="Town C.D."/>
        </authorList>
    </citation>
    <scope>GENOME REANNOTATION</scope>
    <source>
        <strain>cv. Columbia</strain>
    </source>
</reference>
<reference key="3">
    <citation type="journal article" date="2003" name="Science">
        <title>Empirical analysis of transcriptional activity in the Arabidopsis genome.</title>
        <authorList>
            <person name="Yamada K."/>
            <person name="Lim J."/>
            <person name="Dale J.M."/>
            <person name="Chen H."/>
            <person name="Shinn P."/>
            <person name="Palm C.J."/>
            <person name="Southwick A.M."/>
            <person name="Wu H.C."/>
            <person name="Kim C.J."/>
            <person name="Nguyen M."/>
            <person name="Pham P.K."/>
            <person name="Cheuk R.F."/>
            <person name="Karlin-Newmann G."/>
            <person name="Liu S.X."/>
            <person name="Lam B."/>
            <person name="Sakano H."/>
            <person name="Wu T."/>
            <person name="Yu G."/>
            <person name="Miranda M."/>
            <person name="Quach H.L."/>
            <person name="Tripp M."/>
            <person name="Chang C.H."/>
            <person name="Lee J.M."/>
            <person name="Toriumi M.J."/>
            <person name="Chan M.M."/>
            <person name="Tang C.C."/>
            <person name="Onodera C.S."/>
            <person name="Deng J.M."/>
            <person name="Akiyama K."/>
            <person name="Ansari Y."/>
            <person name="Arakawa T."/>
            <person name="Banh J."/>
            <person name="Banno F."/>
            <person name="Bowser L."/>
            <person name="Brooks S.Y."/>
            <person name="Carninci P."/>
            <person name="Chao Q."/>
            <person name="Choy N."/>
            <person name="Enju A."/>
            <person name="Goldsmith A.D."/>
            <person name="Gurjal M."/>
            <person name="Hansen N.F."/>
            <person name="Hayashizaki Y."/>
            <person name="Johnson-Hopson C."/>
            <person name="Hsuan V.W."/>
            <person name="Iida K."/>
            <person name="Karnes M."/>
            <person name="Khan S."/>
            <person name="Koesema E."/>
            <person name="Ishida J."/>
            <person name="Jiang P.X."/>
            <person name="Jones T."/>
            <person name="Kawai J."/>
            <person name="Kamiya A."/>
            <person name="Meyers C."/>
            <person name="Nakajima M."/>
            <person name="Narusaka M."/>
            <person name="Seki M."/>
            <person name="Sakurai T."/>
            <person name="Satou M."/>
            <person name="Tamse R."/>
            <person name="Vaysberg M."/>
            <person name="Wallender E.K."/>
            <person name="Wong C."/>
            <person name="Yamamura Y."/>
            <person name="Yuan S."/>
            <person name="Shinozaki K."/>
            <person name="Davis R.W."/>
            <person name="Theologis A."/>
            <person name="Ecker J.R."/>
        </authorList>
    </citation>
    <scope>NUCLEOTIDE SEQUENCE [LARGE SCALE MRNA]</scope>
    <source>
        <strain>cv. Columbia</strain>
    </source>
</reference>
<reference key="4">
    <citation type="journal article" date="2010" name="Plant J.">
        <title>A mitochondrial rRNA dimethyladenosine methyltransferase in Arabidopsis.</title>
        <authorList>
            <person name="Richter U."/>
            <person name="Kuhn K."/>
            <person name="Okada S."/>
            <person name="Brennicke A."/>
            <person name="Weihe A."/>
            <person name="Borner T."/>
        </authorList>
    </citation>
    <scope>FUNCTION</scope>
    <scope>SUBCELLULAR LOCATION</scope>
    <source>
        <strain>cv. Columbia</strain>
    </source>
</reference>
<reference key="5">
    <citation type="journal article" date="2012" name="Plant Cell">
        <title>Nuclear ribosome biogenesis mediated by the DIM1A rRNA dimethylase is required for organized root growth and epidermal patterning in Arabidopsis.</title>
        <authorList>
            <person name="Wieckowski Y."/>
            <person name="Schiefelbein J."/>
        </authorList>
    </citation>
    <scope>FUNCTION</scope>
    <scope>CATALYTIC ACTIVITY</scope>
    <scope>MUTAGENESIS OF GLY-66</scope>
    <scope>TISSUE SPECIFICITY</scope>
    <scope>SUBCELLULAR LOCATION</scope>
</reference>
<feature type="chain" id="PRO_0000433250" description="Ribosomal RNA small subunit methyltransferase">
    <location>
        <begin position="1"/>
        <end position="353"/>
    </location>
</feature>
<feature type="region of interest" description="Disordered" evidence="2">
    <location>
        <begin position="1"/>
        <end position="23"/>
    </location>
</feature>
<feature type="region of interest" description="Disordered" evidence="2">
    <location>
        <begin position="270"/>
        <end position="313"/>
    </location>
</feature>
<feature type="compositionally biased region" description="Basic residues" evidence="2">
    <location>
        <begin position="1"/>
        <end position="10"/>
    </location>
</feature>
<feature type="compositionally biased region" description="Acidic residues" evidence="2">
    <location>
        <begin position="285"/>
        <end position="308"/>
    </location>
</feature>
<feature type="binding site" evidence="1">
    <location>
        <position position="35"/>
    </location>
    <ligand>
        <name>S-adenosyl-L-methionine</name>
        <dbReference type="ChEBI" id="CHEBI:59789"/>
    </ligand>
</feature>
<feature type="binding site" evidence="1">
    <location>
        <position position="37"/>
    </location>
    <ligand>
        <name>S-adenosyl-L-methionine</name>
        <dbReference type="ChEBI" id="CHEBI:59789"/>
    </ligand>
</feature>
<feature type="binding site" evidence="1">
    <location>
        <position position="62"/>
    </location>
    <ligand>
        <name>S-adenosyl-L-methionine</name>
        <dbReference type="ChEBI" id="CHEBI:59789"/>
    </ligand>
</feature>
<feature type="binding site" evidence="1">
    <location>
        <position position="83"/>
    </location>
    <ligand>
        <name>S-adenosyl-L-methionine</name>
        <dbReference type="ChEBI" id="CHEBI:59789"/>
    </ligand>
</feature>
<feature type="binding site" evidence="1">
    <location>
        <position position="111"/>
    </location>
    <ligand>
        <name>S-adenosyl-L-methionine</name>
        <dbReference type="ChEBI" id="CHEBI:59789"/>
    </ligand>
</feature>
<feature type="binding site" evidence="1">
    <location>
        <position position="126"/>
    </location>
    <ligand>
        <name>S-adenosyl-L-methionine</name>
        <dbReference type="ChEBI" id="CHEBI:59789"/>
    </ligand>
</feature>
<feature type="mutagenesis site" description="In dim1A; loss of adenine methylation, but no effect on pre-rRNA processing." evidence="4">
    <original>G</original>
    <variation>E</variation>
    <location>
        <position position="66"/>
    </location>
</feature>
<protein>
    <recommendedName>
        <fullName evidence="6">Ribosomal RNA small subunit methyltransferase</fullName>
        <ecNumber evidence="4">2.1.1.-</ecNumber>
    </recommendedName>
    <alternativeName>
        <fullName evidence="6">18S nuclear rRNA (adenine(1785)-N(6)/adenine(1786)-N(6))-dimethyltransferase</fullName>
    </alternativeName>
    <alternativeName>
        <fullName evidence="6">Adenosine dimethyl transferase 1A</fullName>
    </alternativeName>
    <alternativeName>
        <fullName evidence="5">Dimethyladenosine transferase 1A</fullName>
    </alternativeName>
</protein>
<accession>O22268</accession>
<name>DIM1A_ARATH</name>
<dbReference type="EC" id="2.1.1.-" evidence="4"/>
<dbReference type="EMBL" id="AC002535">
    <property type="protein sequence ID" value="AAC62868.1"/>
    <property type="molecule type" value="Genomic_DNA"/>
</dbReference>
<dbReference type="EMBL" id="CP002685">
    <property type="protein sequence ID" value="AEC10839.1"/>
    <property type="molecule type" value="Genomic_DNA"/>
</dbReference>
<dbReference type="EMBL" id="AY039949">
    <property type="protein sequence ID" value="AAK64053.1"/>
    <property type="molecule type" value="mRNA"/>
</dbReference>
<dbReference type="EMBL" id="AY113864">
    <property type="protein sequence ID" value="AAM44912.1"/>
    <property type="molecule type" value="mRNA"/>
</dbReference>
<dbReference type="PIR" id="T00442">
    <property type="entry name" value="T00442"/>
</dbReference>
<dbReference type="RefSeq" id="NP_182264.1">
    <property type="nucleotide sequence ID" value="NM_130310.3"/>
</dbReference>
<dbReference type="SMR" id="O22268"/>
<dbReference type="FunCoup" id="O22268">
    <property type="interactions" value="3095"/>
</dbReference>
<dbReference type="STRING" id="3702.O22268"/>
<dbReference type="PaxDb" id="3702-AT2G47420.1"/>
<dbReference type="ProteomicsDB" id="224397"/>
<dbReference type="DNASU" id="819355"/>
<dbReference type="EnsemblPlants" id="AT2G47420.1">
    <property type="protein sequence ID" value="AT2G47420.1"/>
    <property type="gene ID" value="AT2G47420"/>
</dbReference>
<dbReference type="GeneID" id="819355"/>
<dbReference type="Gramene" id="AT2G47420.1">
    <property type="protein sequence ID" value="AT2G47420.1"/>
    <property type="gene ID" value="AT2G47420"/>
</dbReference>
<dbReference type="KEGG" id="ath:AT2G47420"/>
<dbReference type="Araport" id="AT2G47420"/>
<dbReference type="TAIR" id="AT2G47420">
    <property type="gene designation" value="DIM1A"/>
</dbReference>
<dbReference type="eggNOG" id="KOG0820">
    <property type="taxonomic scope" value="Eukaryota"/>
</dbReference>
<dbReference type="HOGENOM" id="CLU_041220_2_0_1"/>
<dbReference type="InParanoid" id="O22268"/>
<dbReference type="OMA" id="ANYRTWC"/>
<dbReference type="OrthoDB" id="74991at2759"/>
<dbReference type="PhylomeDB" id="O22268"/>
<dbReference type="CD-CODE" id="4299E36E">
    <property type="entry name" value="Nucleolus"/>
</dbReference>
<dbReference type="PRO" id="PR:O22268"/>
<dbReference type="Proteomes" id="UP000006548">
    <property type="component" value="Chromosome 2"/>
</dbReference>
<dbReference type="ExpressionAtlas" id="O22268">
    <property type="expression patterns" value="baseline and differential"/>
</dbReference>
<dbReference type="GO" id="GO:0005730">
    <property type="term" value="C:nucleolus"/>
    <property type="evidence" value="ECO:0000314"/>
    <property type="project" value="TAIR"/>
</dbReference>
<dbReference type="GO" id="GO:0005634">
    <property type="term" value="C:nucleus"/>
    <property type="evidence" value="ECO:0000314"/>
    <property type="project" value="TAIR"/>
</dbReference>
<dbReference type="GO" id="GO:0003723">
    <property type="term" value="F:RNA binding"/>
    <property type="evidence" value="ECO:0007669"/>
    <property type="project" value="UniProtKB-KW"/>
</dbReference>
<dbReference type="GO" id="GO:0000179">
    <property type="term" value="F:rRNA (adenine-N6,N6-)-dimethyltransferase activity"/>
    <property type="evidence" value="ECO:0000315"/>
    <property type="project" value="TAIR"/>
</dbReference>
<dbReference type="GO" id="GO:0051301">
    <property type="term" value="P:cell division"/>
    <property type="evidence" value="ECO:0000315"/>
    <property type="project" value="TAIR"/>
</dbReference>
<dbReference type="GO" id="GO:0001708">
    <property type="term" value="P:cell fate specification"/>
    <property type="evidence" value="ECO:0000315"/>
    <property type="project" value="TAIR"/>
</dbReference>
<dbReference type="CDD" id="cd02440">
    <property type="entry name" value="AdoMet_MTases"/>
    <property type="match status" value="1"/>
</dbReference>
<dbReference type="FunFam" id="3.40.50.150:FF:000007">
    <property type="entry name" value="rRNA adenine N(6)-methyltransferase"/>
    <property type="match status" value="1"/>
</dbReference>
<dbReference type="Gene3D" id="1.10.8.480">
    <property type="match status" value="1"/>
</dbReference>
<dbReference type="Gene3D" id="3.40.50.150">
    <property type="entry name" value="Vaccinia Virus protein VP39"/>
    <property type="match status" value="1"/>
</dbReference>
<dbReference type="InterPro" id="IPR001737">
    <property type="entry name" value="KsgA/Erm"/>
</dbReference>
<dbReference type="InterPro" id="IPR020596">
    <property type="entry name" value="rRNA_Ade_Mease_Trfase_CS"/>
</dbReference>
<dbReference type="InterPro" id="IPR020598">
    <property type="entry name" value="rRNA_Ade_methylase_Trfase_N"/>
</dbReference>
<dbReference type="InterPro" id="IPR011530">
    <property type="entry name" value="rRNA_adenine_dimethylase"/>
</dbReference>
<dbReference type="InterPro" id="IPR029063">
    <property type="entry name" value="SAM-dependent_MTases_sf"/>
</dbReference>
<dbReference type="NCBIfam" id="TIGR00755">
    <property type="entry name" value="ksgA"/>
    <property type="match status" value="1"/>
</dbReference>
<dbReference type="PANTHER" id="PTHR11727">
    <property type="entry name" value="DIMETHYLADENOSINE TRANSFERASE"/>
    <property type="match status" value="1"/>
</dbReference>
<dbReference type="PANTHER" id="PTHR11727:SF7">
    <property type="entry name" value="DIMETHYLADENOSINE TRANSFERASE-RELATED"/>
    <property type="match status" value="1"/>
</dbReference>
<dbReference type="Pfam" id="PF00398">
    <property type="entry name" value="RrnaAD"/>
    <property type="match status" value="1"/>
</dbReference>
<dbReference type="SMART" id="SM00650">
    <property type="entry name" value="rADc"/>
    <property type="match status" value="1"/>
</dbReference>
<dbReference type="SUPFAM" id="SSF53335">
    <property type="entry name" value="S-adenosyl-L-methionine-dependent methyltransferases"/>
    <property type="match status" value="1"/>
</dbReference>
<dbReference type="PROSITE" id="PS01131">
    <property type="entry name" value="RRNA_A_DIMETH"/>
    <property type="match status" value="1"/>
</dbReference>
<dbReference type="PROSITE" id="PS51689">
    <property type="entry name" value="SAM_RNA_A_N6_MT"/>
    <property type="match status" value="1"/>
</dbReference>
<organism evidence="11">
    <name type="scientific">Arabidopsis thaliana</name>
    <name type="common">Mouse-ear cress</name>
    <dbReference type="NCBI Taxonomy" id="3702"/>
    <lineage>
        <taxon>Eukaryota</taxon>
        <taxon>Viridiplantae</taxon>
        <taxon>Streptophyta</taxon>
        <taxon>Embryophyta</taxon>
        <taxon>Tracheophyta</taxon>
        <taxon>Spermatophyta</taxon>
        <taxon>Magnoliopsida</taxon>
        <taxon>eudicotyledons</taxon>
        <taxon>Gunneridae</taxon>
        <taxon>Pentapetalae</taxon>
        <taxon>rosids</taxon>
        <taxon>malvids</taxon>
        <taxon>Brassicales</taxon>
        <taxon>Brassicaceae</taxon>
        <taxon>Camelineae</taxon>
        <taxon>Arabidopsis</taxon>
    </lineage>
</organism>
<keyword id="KW-0489">Methyltransferase</keyword>
<keyword id="KW-0539">Nucleus</keyword>
<keyword id="KW-1185">Reference proteome</keyword>
<keyword id="KW-0694">RNA-binding</keyword>
<keyword id="KW-0698">rRNA processing</keyword>
<keyword id="KW-0949">S-adenosyl-L-methionine</keyword>
<keyword id="KW-0808">Transferase</keyword>
<proteinExistence type="evidence at protein level"/>